<accession>Q9WVS2</accession>
<accession>B0BMW7</accession>
<gene>
    <name type="primary">Osgep</name>
    <name type="synonym">Gcpl1</name>
</gene>
<feature type="chain" id="PRO_0000096986" description="tRNA N6-adenosine threonylcarbamoyltransferase">
    <location>
        <begin position="1"/>
        <end position="335"/>
    </location>
</feature>
<feature type="binding site" evidence="2">
    <location>
        <position position="109"/>
    </location>
    <ligand>
        <name>a divalent metal cation</name>
        <dbReference type="ChEBI" id="CHEBI:60240"/>
    </ligand>
</feature>
<feature type="binding site" evidence="2">
    <location>
        <position position="113"/>
    </location>
    <ligand>
        <name>a divalent metal cation</name>
        <dbReference type="ChEBI" id="CHEBI:60240"/>
    </ligand>
</feature>
<feature type="binding site" evidence="2">
    <location>
        <begin position="130"/>
        <end position="134"/>
    </location>
    <ligand>
        <name>substrate</name>
    </ligand>
</feature>
<feature type="binding site" evidence="2">
    <location>
        <position position="130"/>
    </location>
    <ligand>
        <name>a divalent metal cation</name>
        <dbReference type="ChEBI" id="CHEBI:60240"/>
    </ligand>
</feature>
<feature type="binding site" evidence="2">
    <location>
        <position position="162"/>
    </location>
    <ligand>
        <name>substrate</name>
    </ligand>
</feature>
<feature type="binding site" evidence="2">
    <location>
        <position position="177"/>
    </location>
    <ligand>
        <name>substrate</name>
    </ligand>
</feature>
<feature type="binding site" evidence="2">
    <location>
        <position position="181"/>
    </location>
    <ligand>
        <name>substrate</name>
    </ligand>
</feature>
<feature type="binding site" evidence="2">
    <location>
        <position position="266"/>
    </location>
    <ligand>
        <name>substrate</name>
    </ligand>
</feature>
<feature type="binding site" evidence="2">
    <location>
        <position position="294"/>
    </location>
    <ligand>
        <name>a divalent metal cation</name>
        <dbReference type="ChEBI" id="CHEBI:60240"/>
    </ligand>
</feature>
<organism>
    <name type="scientific">Rattus norvegicus</name>
    <name type="common">Rat</name>
    <dbReference type="NCBI Taxonomy" id="10116"/>
    <lineage>
        <taxon>Eukaryota</taxon>
        <taxon>Metazoa</taxon>
        <taxon>Chordata</taxon>
        <taxon>Craniata</taxon>
        <taxon>Vertebrata</taxon>
        <taxon>Euteleostomi</taxon>
        <taxon>Mammalia</taxon>
        <taxon>Eutheria</taxon>
        <taxon>Euarchontoglires</taxon>
        <taxon>Glires</taxon>
        <taxon>Rodentia</taxon>
        <taxon>Myomorpha</taxon>
        <taxon>Muroidea</taxon>
        <taxon>Muridae</taxon>
        <taxon>Murinae</taxon>
        <taxon>Rattus</taxon>
    </lineage>
</organism>
<proteinExistence type="evidence at transcript level"/>
<comment type="function">
    <text evidence="2">Component of the EKC/KEOPS complex that is required for the formation of a threonylcarbamoyl group on adenosine at position 37 (t(6)A37) in tRNAs that read codons beginning with adenine. The complex is probably involved in the transfer of the threonylcarbamoyl moiety of threonylcarbamoyl-AMP (TC-AMP) to the N6 group of A37. OSGEP likely plays a direct catalytic role in this reaction, but requires other protein(s) of the complex to fulfill this activity.</text>
</comment>
<comment type="catalytic activity">
    <reaction evidence="2">
        <text>L-threonylcarbamoyladenylate + adenosine(37) in tRNA = N(6)-L-threonylcarbamoyladenosine(37) in tRNA + AMP + H(+)</text>
        <dbReference type="Rhea" id="RHEA:37059"/>
        <dbReference type="Rhea" id="RHEA-COMP:10162"/>
        <dbReference type="Rhea" id="RHEA-COMP:10163"/>
        <dbReference type="ChEBI" id="CHEBI:15378"/>
        <dbReference type="ChEBI" id="CHEBI:73682"/>
        <dbReference type="ChEBI" id="CHEBI:74411"/>
        <dbReference type="ChEBI" id="CHEBI:74418"/>
        <dbReference type="ChEBI" id="CHEBI:456215"/>
        <dbReference type="EC" id="2.3.1.234"/>
    </reaction>
</comment>
<comment type="cofactor">
    <cofactor evidence="2">
        <name>a divalent metal cation</name>
        <dbReference type="ChEBI" id="CHEBI:60240"/>
    </cofactor>
    <text evidence="2">Binds 1 divalent metal cation per subunit.</text>
</comment>
<comment type="subunit">
    <text evidence="1 2">Component of the EKC/KEOPS complex composed of at least GON7, TP53RK, TPRKB, OSGEP and LAGE3; the whole complex dimerizes.</text>
</comment>
<comment type="subcellular location">
    <subcellularLocation>
        <location evidence="2">Cytoplasm</location>
    </subcellularLocation>
    <subcellularLocation>
        <location evidence="2">Nucleus</location>
    </subcellularLocation>
</comment>
<comment type="similarity">
    <text evidence="2">Belongs to the KAE1 / TsaD family.</text>
</comment>
<sequence length="335" mass="36357">MPAVLGFEGSANKIGVGVVRDGTVLANPRRTYVTAPGTGFLPGDTARHHRAVILDLLQEALTEAGLTPKDIDCIAYTKGPGMGAPLASVAVVARTVAQLWNKPLLGVNHCIGHIEMGRLITGAVNPTVLYVSGGNTQVISYSEHRYRIFGETIDIAVGNCLDRFARVLKISNDPSPGYNIEQMAKRGKKLVELPYTVKGMDVSFSGILSFIEDAAQRMLATGECTPEDLCFSLQETVFAMLVEITERAMAHCGSKEALIVGGVGCNVRLQEMMATMCQERGAQLFATDERFCIDNGAMIAQAGWEMFQAGHRTPLQDSGITQRYRTDEVEVTWRD</sequence>
<evidence type="ECO:0000250" key="1">
    <source>
        <dbReference type="UniProtKB" id="Q9NPF4"/>
    </source>
</evidence>
<evidence type="ECO:0000255" key="2">
    <source>
        <dbReference type="HAMAP-Rule" id="MF_03180"/>
    </source>
</evidence>
<name>OSGEP_RAT</name>
<protein>
    <recommendedName>
        <fullName evidence="2">tRNA N6-adenosine threonylcarbamoyltransferase</fullName>
        <ecNumber evidence="2">2.3.1.234</ecNumber>
    </recommendedName>
    <alternativeName>
        <fullName>N6-L-threonylcarbamoyladenine synthase</fullName>
        <shortName>t(6)A synthase</shortName>
    </alternativeName>
    <alternativeName>
        <fullName evidence="2">O-sialoglycoprotein endopeptidase</fullName>
    </alternativeName>
    <alternativeName>
        <fullName evidence="2">t(6)A37 threonylcarbamoyladenosine biosynthesis protein Osgep</fullName>
    </alternativeName>
    <alternativeName>
        <fullName evidence="2">tRNA threonylcarbamoyladenosine biosynthesis protein Osgep</fullName>
    </alternativeName>
</protein>
<reference key="1">
    <citation type="journal article" date="2004" name="Nature">
        <title>Genome sequence of the Brown Norway rat yields insights into mammalian evolution.</title>
        <authorList>
            <person name="Gibbs R.A."/>
            <person name="Weinstock G.M."/>
            <person name="Metzker M.L."/>
            <person name="Muzny D.M."/>
            <person name="Sodergren E.J."/>
            <person name="Scherer S."/>
            <person name="Scott G."/>
            <person name="Steffen D."/>
            <person name="Worley K.C."/>
            <person name="Burch P.E."/>
            <person name="Okwuonu G."/>
            <person name="Hines S."/>
            <person name="Lewis L."/>
            <person name="Deramo C."/>
            <person name="Delgado O."/>
            <person name="Dugan-Rocha S."/>
            <person name="Miner G."/>
            <person name="Morgan M."/>
            <person name="Hawes A."/>
            <person name="Gill R."/>
            <person name="Holt R.A."/>
            <person name="Adams M.D."/>
            <person name="Amanatides P.G."/>
            <person name="Baden-Tillson H."/>
            <person name="Barnstead M."/>
            <person name="Chin S."/>
            <person name="Evans C.A."/>
            <person name="Ferriera S."/>
            <person name="Fosler C."/>
            <person name="Glodek A."/>
            <person name="Gu Z."/>
            <person name="Jennings D."/>
            <person name="Kraft C.L."/>
            <person name="Nguyen T."/>
            <person name="Pfannkoch C.M."/>
            <person name="Sitter C."/>
            <person name="Sutton G.G."/>
            <person name="Venter J.C."/>
            <person name="Woodage T."/>
            <person name="Smith D."/>
            <person name="Lee H.-M."/>
            <person name="Gustafson E."/>
            <person name="Cahill P."/>
            <person name="Kana A."/>
            <person name="Doucette-Stamm L."/>
            <person name="Weinstock K."/>
            <person name="Fechtel K."/>
            <person name="Weiss R.B."/>
            <person name="Dunn D.M."/>
            <person name="Green E.D."/>
            <person name="Blakesley R.W."/>
            <person name="Bouffard G.G."/>
            <person name="De Jong P.J."/>
            <person name="Osoegawa K."/>
            <person name="Zhu B."/>
            <person name="Marra M."/>
            <person name="Schein J."/>
            <person name="Bosdet I."/>
            <person name="Fjell C."/>
            <person name="Jones S."/>
            <person name="Krzywinski M."/>
            <person name="Mathewson C."/>
            <person name="Siddiqui A."/>
            <person name="Wye N."/>
            <person name="McPherson J."/>
            <person name="Zhao S."/>
            <person name="Fraser C.M."/>
            <person name="Shetty J."/>
            <person name="Shatsman S."/>
            <person name="Geer K."/>
            <person name="Chen Y."/>
            <person name="Abramzon S."/>
            <person name="Nierman W.C."/>
            <person name="Havlak P.H."/>
            <person name="Chen R."/>
            <person name="Durbin K.J."/>
            <person name="Egan A."/>
            <person name="Ren Y."/>
            <person name="Song X.-Z."/>
            <person name="Li B."/>
            <person name="Liu Y."/>
            <person name="Qin X."/>
            <person name="Cawley S."/>
            <person name="Cooney A.J."/>
            <person name="D'Souza L.M."/>
            <person name="Martin K."/>
            <person name="Wu J.Q."/>
            <person name="Gonzalez-Garay M.L."/>
            <person name="Jackson A.R."/>
            <person name="Kalafus K.J."/>
            <person name="McLeod M.P."/>
            <person name="Milosavljevic A."/>
            <person name="Virk D."/>
            <person name="Volkov A."/>
            <person name="Wheeler D.A."/>
            <person name="Zhang Z."/>
            <person name="Bailey J.A."/>
            <person name="Eichler E.E."/>
            <person name="Tuzun E."/>
            <person name="Birney E."/>
            <person name="Mongin E."/>
            <person name="Ureta-Vidal A."/>
            <person name="Woodwark C."/>
            <person name="Zdobnov E."/>
            <person name="Bork P."/>
            <person name="Suyama M."/>
            <person name="Torrents D."/>
            <person name="Alexandersson M."/>
            <person name="Trask B.J."/>
            <person name="Young J.M."/>
            <person name="Huang H."/>
            <person name="Wang H."/>
            <person name="Xing H."/>
            <person name="Daniels S."/>
            <person name="Gietzen D."/>
            <person name="Schmidt J."/>
            <person name="Stevens K."/>
            <person name="Vitt U."/>
            <person name="Wingrove J."/>
            <person name="Camara F."/>
            <person name="Mar Alba M."/>
            <person name="Abril J.F."/>
            <person name="Guigo R."/>
            <person name="Smit A."/>
            <person name="Dubchak I."/>
            <person name="Rubin E.M."/>
            <person name="Couronne O."/>
            <person name="Poliakov A."/>
            <person name="Huebner N."/>
            <person name="Ganten D."/>
            <person name="Goesele C."/>
            <person name="Hummel O."/>
            <person name="Kreitler T."/>
            <person name="Lee Y.-A."/>
            <person name="Monti J."/>
            <person name="Schulz H."/>
            <person name="Zimdahl H."/>
            <person name="Himmelbauer H."/>
            <person name="Lehrach H."/>
            <person name="Jacob H.J."/>
            <person name="Bromberg S."/>
            <person name="Gullings-Handley J."/>
            <person name="Jensen-Seaman M.I."/>
            <person name="Kwitek A.E."/>
            <person name="Lazar J."/>
            <person name="Pasko D."/>
            <person name="Tonellato P.J."/>
            <person name="Twigger S."/>
            <person name="Ponting C.P."/>
            <person name="Duarte J.M."/>
            <person name="Rice S."/>
            <person name="Goodstadt L."/>
            <person name="Beatson S.A."/>
            <person name="Emes R.D."/>
            <person name="Winter E.E."/>
            <person name="Webber C."/>
            <person name="Brandt P."/>
            <person name="Nyakatura G."/>
            <person name="Adetobi M."/>
            <person name="Chiaromonte F."/>
            <person name="Elnitski L."/>
            <person name="Eswara P."/>
            <person name="Hardison R.C."/>
            <person name="Hou M."/>
            <person name="Kolbe D."/>
            <person name="Makova K."/>
            <person name="Miller W."/>
            <person name="Nekrutenko A."/>
            <person name="Riemer C."/>
            <person name="Schwartz S."/>
            <person name="Taylor J."/>
            <person name="Yang S."/>
            <person name="Zhang Y."/>
            <person name="Lindpaintner K."/>
            <person name="Andrews T.D."/>
            <person name="Caccamo M."/>
            <person name="Clamp M."/>
            <person name="Clarke L."/>
            <person name="Curwen V."/>
            <person name="Durbin R.M."/>
            <person name="Eyras E."/>
            <person name="Searle S.M."/>
            <person name="Cooper G.M."/>
            <person name="Batzoglou S."/>
            <person name="Brudno M."/>
            <person name="Sidow A."/>
            <person name="Stone E.A."/>
            <person name="Payseur B.A."/>
            <person name="Bourque G."/>
            <person name="Lopez-Otin C."/>
            <person name="Puente X.S."/>
            <person name="Chakrabarti K."/>
            <person name="Chatterji S."/>
            <person name="Dewey C."/>
            <person name="Pachter L."/>
            <person name="Bray N."/>
            <person name="Yap V.B."/>
            <person name="Caspi A."/>
            <person name="Tesler G."/>
            <person name="Pevzner P.A."/>
            <person name="Haussler D."/>
            <person name="Roskin K.M."/>
            <person name="Baertsch R."/>
            <person name="Clawson H."/>
            <person name="Furey T.S."/>
            <person name="Hinrichs A.S."/>
            <person name="Karolchik D."/>
            <person name="Kent W.J."/>
            <person name="Rosenbloom K.R."/>
            <person name="Trumbower H."/>
            <person name="Weirauch M."/>
            <person name="Cooper D.N."/>
            <person name="Stenson P.D."/>
            <person name="Ma B."/>
            <person name="Brent M."/>
            <person name="Arumugam M."/>
            <person name="Shteynberg D."/>
            <person name="Copley R.R."/>
            <person name="Taylor M.S."/>
            <person name="Riethman H."/>
            <person name="Mudunuri U."/>
            <person name="Peterson J."/>
            <person name="Guyer M."/>
            <person name="Felsenfeld A."/>
            <person name="Old S."/>
            <person name="Mockrin S."/>
            <person name="Collins F.S."/>
        </authorList>
    </citation>
    <scope>NUCLEOTIDE SEQUENCE [LARGE SCALE GENOMIC DNA]</scope>
    <source>
        <strain>Brown Norway</strain>
    </source>
</reference>
<reference key="2">
    <citation type="submission" date="2005-07" db="EMBL/GenBank/DDBJ databases">
        <authorList>
            <person name="Mural R.J."/>
            <person name="Adams M.D."/>
            <person name="Myers E.W."/>
            <person name="Smith H.O."/>
            <person name="Venter J.C."/>
        </authorList>
    </citation>
    <scope>NUCLEOTIDE SEQUENCE [LARGE SCALE GENOMIC DNA]</scope>
</reference>
<reference key="3">
    <citation type="journal article" date="2004" name="Genome Res.">
        <title>The status, quality, and expansion of the NIH full-length cDNA project: the Mammalian Gene Collection (MGC).</title>
        <authorList>
            <consortium name="The MGC Project Team"/>
        </authorList>
    </citation>
    <scope>NUCLEOTIDE SEQUENCE [LARGE SCALE MRNA]</scope>
    <source>
        <tissue>Embryonic brain</tissue>
    </source>
</reference>
<reference key="4">
    <citation type="journal article" date="1999" name="Acta Med. Okayama">
        <title>Genomic structure of the rat major AP endonuclease gene (Apex) with an adjacent putative O-sialoglycoprotease gene (Prsmg1/Gcpl1) and a processed Apex pseudogene (Apexp1).</title>
        <authorList>
            <person name="Yao M."/>
            <person name="Akiyama K."/>
            <person name="Tan Y."/>
            <person name="Sarker A.H."/>
            <person name="Ikeda S."/>
            <person name="Alam S.S."/>
            <person name="Tsutsui K."/>
            <person name="Yoshida M.C."/>
            <person name="Seki S."/>
        </authorList>
    </citation>
    <scope>NUCLEOTIDE SEQUENCE [GENOMIC DNA] OF 1-322</scope>
</reference>
<keyword id="KW-0012">Acyltransferase</keyword>
<keyword id="KW-0963">Cytoplasm</keyword>
<keyword id="KW-0479">Metal-binding</keyword>
<keyword id="KW-0539">Nucleus</keyword>
<keyword id="KW-1185">Reference proteome</keyword>
<keyword id="KW-0808">Transferase</keyword>
<keyword id="KW-0819">tRNA processing</keyword>
<dbReference type="EC" id="2.3.1.234" evidence="2"/>
<dbReference type="EMBL" id="AABR06082825">
    <property type="status" value="NOT_ANNOTATED_CDS"/>
    <property type="molecule type" value="Genomic_DNA"/>
</dbReference>
<dbReference type="EMBL" id="CH474040">
    <property type="protein sequence ID" value="EDL88425.1"/>
    <property type="molecule type" value="Genomic_DNA"/>
</dbReference>
<dbReference type="EMBL" id="BC158592">
    <property type="protein sequence ID" value="AAI58593.1"/>
    <property type="molecule type" value="mRNA"/>
</dbReference>
<dbReference type="EMBL" id="AB023065">
    <property type="protein sequence ID" value="BAA82123.1"/>
    <property type="molecule type" value="Genomic_DNA"/>
</dbReference>
<dbReference type="RefSeq" id="NP_001093980.1">
    <property type="nucleotide sequence ID" value="NM_001100510.1"/>
</dbReference>
<dbReference type="SMR" id="Q9WVS2"/>
<dbReference type="FunCoup" id="Q9WVS2">
    <property type="interactions" value="2265"/>
</dbReference>
<dbReference type="STRING" id="10116.ENSRNOP00000012789"/>
<dbReference type="PhosphoSitePlus" id="Q9WVS2"/>
<dbReference type="jPOST" id="Q9WVS2"/>
<dbReference type="PaxDb" id="10116-ENSRNOP00000012789"/>
<dbReference type="PeptideAtlas" id="Q9WVS2"/>
<dbReference type="Ensembl" id="ENSRNOT00000012790.8">
    <property type="protein sequence ID" value="ENSRNOP00000012789.4"/>
    <property type="gene ID" value="ENSRNOG00000009333.8"/>
</dbReference>
<dbReference type="GeneID" id="290028"/>
<dbReference type="KEGG" id="rno:290028"/>
<dbReference type="UCSC" id="RGD:1308578">
    <property type="organism name" value="rat"/>
</dbReference>
<dbReference type="AGR" id="RGD:1308578"/>
<dbReference type="CTD" id="55644"/>
<dbReference type="RGD" id="1308578">
    <property type="gene designation" value="Osgep"/>
</dbReference>
<dbReference type="eggNOG" id="KOG2708">
    <property type="taxonomic scope" value="Eukaryota"/>
</dbReference>
<dbReference type="GeneTree" id="ENSGT00940000153744"/>
<dbReference type="HOGENOM" id="CLU_023208_2_2_1"/>
<dbReference type="InParanoid" id="Q9WVS2"/>
<dbReference type="OMA" id="HHRSWVV"/>
<dbReference type="OrthoDB" id="10254073at2759"/>
<dbReference type="PhylomeDB" id="Q9WVS2"/>
<dbReference type="TreeFam" id="TF313621"/>
<dbReference type="PRO" id="PR:Q9WVS2"/>
<dbReference type="Proteomes" id="UP000002494">
    <property type="component" value="Chromosome 15"/>
</dbReference>
<dbReference type="Proteomes" id="UP000234681">
    <property type="component" value="Chromosome 15"/>
</dbReference>
<dbReference type="Bgee" id="ENSRNOG00000009333">
    <property type="expression patterns" value="Expressed in ovary and 20 other cell types or tissues"/>
</dbReference>
<dbReference type="GO" id="GO:0005737">
    <property type="term" value="C:cytoplasm"/>
    <property type="evidence" value="ECO:0000250"/>
    <property type="project" value="UniProtKB"/>
</dbReference>
<dbReference type="GO" id="GO:0005829">
    <property type="term" value="C:cytosol"/>
    <property type="evidence" value="ECO:0007669"/>
    <property type="project" value="Ensembl"/>
</dbReference>
<dbReference type="GO" id="GO:0000408">
    <property type="term" value="C:EKC/KEOPS complex"/>
    <property type="evidence" value="ECO:0000250"/>
    <property type="project" value="UniProtKB"/>
</dbReference>
<dbReference type="GO" id="GO:0005654">
    <property type="term" value="C:nucleoplasm"/>
    <property type="evidence" value="ECO:0007669"/>
    <property type="project" value="Ensembl"/>
</dbReference>
<dbReference type="GO" id="GO:0005634">
    <property type="term" value="C:nucleus"/>
    <property type="evidence" value="ECO:0000250"/>
    <property type="project" value="UniProtKB"/>
</dbReference>
<dbReference type="GO" id="GO:0046872">
    <property type="term" value="F:metal ion binding"/>
    <property type="evidence" value="ECO:0007669"/>
    <property type="project" value="UniProtKB-KW"/>
</dbReference>
<dbReference type="GO" id="GO:0061711">
    <property type="term" value="F:N(6)-L-threonylcarbamoyladenine synthase activity"/>
    <property type="evidence" value="ECO:0000266"/>
    <property type="project" value="RGD"/>
</dbReference>
<dbReference type="GO" id="GO:0006400">
    <property type="term" value="P:tRNA modification"/>
    <property type="evidence" value="ECO:0000266"/>
    <property type="project" value="RGD"/>
</dbReference>
<dbReference type="GO" id="GO:0002949">
    <property type="term" value="P:tRNA threonylcarbamoyladenosine modification"/>
    <property type="evidence" value="ECO:0000250"/>
    <property type="project" value="UniProtKB"/>
</dbReference>
<dbReference type="CDD" id="cd24132">
    <property type="entry name" value="ASKHA_NBD_OSGEP_like_euk"/>
    <property type="match status" value="1"/>
</dbReference>
<dbReference type="FunFam" id="3.30.420.40:FF:000038">
    <property type="entry name" value="Probable tRNA N6-adenosine threonylcarbamoyltransferase"/>
    <property type="match status" value="1"/>
</dbReference>
<dbReference type="FunFam" id="3.30.420.40:FF:000295">
    <property type="entry name" value="Probable tRNA N6-adenosine threonylcarbamoyltransferase"/>
    <property type="match status" value="1"/>
</dbReference>
<dbReference type="Gene3D" id="3.30.420.40">
    <property type="match status" value="2"/>
</dbReference>
<dbReference type="HAMAP" id="MF_01446">
    <property type="entry name" value="Kae1"/>
    <property type="match status" value="1"/>
</dbReference>
<dbReference type="InterPro" id="IPR043129">
    <property type="entry name" value="ATPase_NBD"/>
</dbReference>
<dbReference type="InterPro" id="IPR000905">
    <property type="entry name" value="Gcp-like_dom"/>
</dbReference>
<dbReference type="InterPro" id="IPR017861">
    <property type="entry name" value="KAE1/TsaD"/>
</dbReference>
<dbReference type="InterPro" id="IPR034680">
    <property type="entry name" value="Kae1_archaea_euk"/>
</dbReference>
<dbReference type="InterPro" id="IPR017860">
    <property type="entry name" value="Peptidase_M22_CS"/>
</dbReference>
<dbReference type="NCBIfam" id="TIGR03722">
    <property type="entry name" value="arch_KAE1"/>
    <property type="match status" value="1"/>
</dbReference>
<dbReference type="NCBIfam" id="TIGR00329">
    <property type="entry name" value="gcp_kae1"/>
    <property type="match status" value="1"/>
</dbReference>
<dbReference type="PANTHER" id="PTHR11735">
    <property type="entry name" value="TRNA N6-ADENOSINE THREONYLCARBAMOYLTRANSFERASE"/>
    <property type="match status" value="1"/>
</dbReference>
<dbReference type="PANTHER" id="PTHR11735:SF14">
    <property type="entry name" value="TRNA N6-ADENOSINE THREONYLCARBAMOYLTRANSFERASE"/>
    <property type="match status" value="1"/>
</dbReference>
<dbReference type="Pfam" id="PF00814">
    <property type="entry name" value="TsaD"/>
    <property type="match status" value="1"/>
</dbReference>
<dbReference type="PRINTS" id="PR00789">
    <property type="entry name" value="OSIALOPTASE"/>
</dbReference>
<dbReference type="SUPFAM" id="SSF53067">
    <property type="entry name" value="Actin-like ATPase domain"/>
    <property type="match status" value="1"/>
</dbReference>
<dbReference type="PROSITE" id="PS01016">
    <property type="entry name" value="GLYCOPROTEASE"/>
    <property type="match status" value="1"/>
</dbReference>